<proteinExistence type="evidence at transcript level"/>
<accession>Q8MJ25</accession>
<dbReference type="EMBL" id="AF529185">
    <property type="protein sequence ID" value="AAM94409.1"/>
    <property type="molecule type" value="mRNA"/>
</dbReference>
<dbReference type="SMR" id="Q8MJ25"/>
<dbReference type="STRING" id="9940.ENSOARP00000006813"/>
<dbReference type="PaxDb" id="9940-ENSOARP00000006813"/>
<dbReference type="eggNOG" id="ENOG502RYPR">
    <property type="taxonomic scope" value="Eukaryota"/>
</dbReference>
<dbReference type="Proteomes" id="UP000002356">
    <property type="component" value="Unplaced"/>
</dbReference>
<dbReference type="GO" id="GO:0005615">
    <property type="term" value="C:extracellular space"/>
    <property type="evidence" value="ECO:0000250"/>
    <property type="project" value="UniProtKB"/>
</dbReference>
<dbReference type="GO" id="GO:0031769">
    <property type="term" value="F:glucagon receptor binding"/>
    <property type="evidence" value="ECO:0007669"/>
    <property type="project" value="TreeGrafter"/>
</dbReference>
<dbReference type="GO" id="GO:0005179">
    <property type="term" value="F:hormone activity"/>
    <property type="evidence" value="ECO:0007669"/>
    <property type="project" value="UniProtKB-KW"/>
</dbReference>
<dbReference type="GO" id="GO:0007188">
    <property type="term" value="P:adenylate cyclase-modulating G protein-coupled receptor signaling pathway"/>
    <property type="evidence" value="ECO:0007669"/>
    <property type="project" value="TreeGrafter"/>
</dbReference>
<dbReference type="GO" id="GO:0042593">
    <property type="term" value="P:glucose homeostasis"/>
    <property type="evidence" value="ECO:0000250"/>
    <property type="project" value="UniProtKB"/>
</dbReference>
<dbReference type="GO" id="GO:0043066">
    <property type="term" value="P:negative regulation of apoptotic process"/>
    <property type="evidence" value="ECO:0007669"/>
    <property type="project" value="TreeGrafter"/>
</dbReference>
<dbReference type="GO" id="GO:0035774">
    <property type="term" value="P:positive regulation of insulin secretion involved in cellular response to glucose stimulus"/>
    <property type="evidence" value="ECO:0007669"/>
    <property type="project" value="TreeGrafter"/>
</dbReference>
<dbReference type="GO" id="GO:0010737">
    <property type="term" value="P:protein kinase A signaling"/>
    <property type="evidence" value="ECO:0007669"/>
    <property type="project" value="TreeGrafter"/>
</dbReference>
<dbReference type="GO" id="GO:0050796">
    <property type="term" value="P:regulation of insulin secretion"/>
    <property type="evidence" value="ECO:0000250"/>
    <property type="project" value="UniProtKB"/>
</dbReference>
<dbReference type="GO" id="GO:0014823">
    <property type="term" value="P:response to activity"/>
    <property type="evidence" value="ECO:0000250"/>
    <property type="project" value="UniProtKB"/>
</dbReference>
<dbReference type="Gene3D" id="6.10.250.590">
    <property type="match status" value="3"/>
</dbReference>
<dbReference type="InterPro" id="IPR015550">
    <property type="entry name" value="Glucagon"/>
</dbReference>
<dbReference type="InterPro" id="IPR000532">
    <property type="entry name" value="Glucagon_GIP_secretin_VIP"/>
</dbReference>
<dbReference type="PANTHER" id="PTHR11418">
    <property type="entry name" value="GLUCAGON"/>
    <property type="match status" value="1"/>
</dbReference>
<dbReference type="PANTHER" id="PTHR11418:SF0">
    <property type="entry name" value="PRO-GLUCAGON"/>
    <property type="match status" value="1"/>
</dbReference>
<dbReference type="Pfam" id="PF00123">
    <property type="entry name" value="Hormone_2"/>
    <property type="match status" value="3"/>
</dbReference>
<dbReference type="PRINTS" id="PR00275">
    <property type="entry name" value="GLUCAGON"/>
</dbReference>
<dbReference type="SMART" id="SM00070">
    <property type="entry name" value="GLUCA"/>
    <property type="match status" value="3"/>
</dbReference>
<dbReference type="PROSITE" id="PS00260">
    <property type="entry name" value="GLUCAGON"/>
    <property type="match status" value="4"/>
</dbReference>
<gene>
    <name type="primary">GCG</name>
</gene>
<name>GLUC_SHEEP</name>
<feature type="signal peptide">
    <location>
        <begin position="1"/>
        <end position="20"/>
    </location>
</feature>
<feature type="peptide" id="PRO_0000011313" description="Glicentin" evidence="2">
    <location>
        <begin position="21"/>
        <end position="89"/>
    </location>
</feature>
<feature type="peptide" id="PRO_0000011314" description="Glicentin-related polypeptide" evidence="5">
    <location>
        <begin position="21"/>
        <end position="50"/>
    </location>
</feature>
<feature type="peptide" id="PRO_0000011315" description="Oxyntomodulin" evidence="4">
    <location>
        <begin position="53"/>
        <end position="89"/>
    </location>
</feature>
<feature type="peptide" id="PRO_0000011316" description="Glucagon">
    <location>
        <begin position="53"/>
        <end position="81"/>
    </location>
</feature>
<feature type="propeptide" id="PRO_0000011317" evidence="3">
    <location>
        <begin position="84"/>
        <end position="89"/>
    </location>
</feature>
<feature type="peptide" id="PRO_0000011318" description="Glucagon-like peptide 1" evidence="3">
    <location>
        <begin position="92"/>
        <end position="128"/>
    </location>
</feature>
<feature type="peptide" id="PRO_0000011319" description="Glucagon-like peptide 1(7-37)" evidence="3">
    <location>
        <begin position="98"/>
        <end position="128"/>
    </location>
</feature>
<feature type="peptide" id="PRO_0000011320" description="Glucagon-like peptide 1(7-36)" evidence="3">
    <location>
        <begin position="98"/>
        <end position="127"/>
    </location>
</feature>
<feature type="propeptide" id="PRO_0000011321" evidence="6">
    <location>
        <begin position="131"/>
        <end position="145"/>
    </location>
</feature>
<feature type="peptide" id="PRO_0000011322" description="Glucagon-like peptide 2" evidence="6">
    <location>
        <begin position="146"/>
        <end position="176" status="greater than"/>
    </location>
</feature>
<feature type="region of interest" description="Disordered" evidence="8">
    <location>
        <begin position="25"/>
        <end position="59"/>
    </location>
</feature>
<feature type="compositionally biased region" description="Polar residues" evidence="8">
    <location>
        <begin position="25"/>
        <end position="35"/>
    </location>
</feature>
<feature type="site" description="Cleavage; by PCSK2" evidence="1">
    <location>
        <begin position="52"/>
        <end position="53"/>
    </location>
</feature>
<feature type="site" description="Cleavage; by PCSK1 and PCSK2" evidence="1">
    <location>
        <begin position="83"/>
        <end position="84"/>
    </location>
</feature>
<feature type="site" description="Cleavage; by PCSK1" evidence="1">
    <location>
        <begin position="91"/>
        <end position="92"/>
    </location>
</feature>
<feature type="site" description="Cleavage; by PCSK1" evidence="1">
    <location>
        <begin position="97"/>
        <end position="98"/>
    </location>
</feature>
<feature type="site" description="Cleavage; by PCSK1" evidence="1">
    <location>
        <begin position="130"/>
        <end position="131"/>
    </location>
</feature>
<feature type="site" description="Cleavage; by PCSK1" evidence="1">
    <location>
        <begin position="145"/>
        <end position="146"/>
    </location>
</feature>
<feature type="modified residue" description="Phosphoserine" evidence="7">
    <location>
        <position position="54"/>
    </location>
</feature>
<feature type="modified residue" description="Phosphoserine" evidence="7">
    <location>
        <position position="105"/>
    </location>
</feature>
<feature type="modified residue" description="Phosphoserine" evidence="7">
    <location>
        <position position="108"/>
    </location>
</feature>
<feature type="modified residue" description="Arginine amide" evidence="1">
    <location>
        <position position="127"/>
    </location>
</feature>
<feature type="modified residue" description="Phosphoserine" evidence="7">
    <location>
        <position position="150"/>
    </location>
</feature>
<feature type="modified residue" description="Phosphoserine" evidence="7">
    <location>
        <position position="152"/>
    </location>
</feature>
<feature type="non-terminal residue">
    <location>
        <position position="176"/>
    </location>
</feature>
<keyword id="KW-0027">Amidation</keyword>
<keyword id="KW-0165">Cleavage on pair of basic residues</keyword>
<keyword id="KW-0372">Hormone</keyword>
<keyword id="KW-0597">Phosphoprotein</keyword>
<keyword id="KW-1185">Reference proteome</keyword>
<keyword id="KW-0964">Secreted</keyword>
<keyword id="KW-0732">Signal</keyword>
<protein>
    <recommendedName>
        <fullName>Pro-glucagon</fullName>
    </recommendedName>
    <component>
        <recommendedName>
            <fullName>Glicentin</fullName>
        </recommendedName>
    </component>
    <component>
        <recommendedName>
            <fullName>Glicentin-related polypeptide</fullName>
            <shortName>GRPP</shortName>
        </recommendedName>
    </component>
    <component>
        <recommendedName>
            <fullName>Oxyntomodulin</fullName>
            <shortName>OXM</shortName>
            <shortName>OXY</shortName>
        </recommendedName>
    </component>
    <component>
        <recommendedName>
            <fullName>Glucagon</fullName>
        </recommendedName>
    </component>
    <component>
        <recommendedName>
            <fullName>Glucagon-like peptide 1</fullName>
            <shortName>GLP-1</shortName>
        </recommendedName>
    </component>
    <component>
        <recommendedName>
            <fullName>Glucagon-like peptide 1(7-37)</fullName>
            <shortName>GLP-1(7-37)</shortName>
        </recommendedName>
    </component>
    <component>
        <recommendedName>
            <fullName>Glucagon-like peptide 1(7-36)</fullName>
            <shortName>GLP-1(7-36)</shortName>
        </recommendedName>
    </component>
    <component>
        <recommendedName>
            <fullName>Glucagon-like peptide 2</fullName>
            <shortName>GLP-2</shortName>
        </recommendedName>
    </component>
</protein>
<organism>
    <name type="scientific">Ovis aries</name>
    <name type="common">Sheep</name>
    <dbReference type="NCBI Taxonomy" id="9940"/>
    <lineage>
        <taxon>Eukaryota</taxon>
        <taxon>Metazoa</taxon>
        <taxon>Chordata</taxon>
        <taxon>Craniata</taxon>
        <taxon>Vertebrata</taxon>
        <taxon>Euteleostomi</taxon>
        <taxon>Mammalia</taxon>
        <taxon>Eutheria</taxon>
        <taxon>Laurasiatheria</taxon>
        <taxon>Artiodactyla</taxon>
        <taxon>Ruminantia</taxon>
        <taxon>Pecora</taxon>
        <taxon>Bovidae</taxon>
        <taxon>Caprinae</taxon>
        <taxon>Ovis</taxon>
    </lineage>
</organism>
<sequence>MKSLYFVAGLLVMLAQGSWQHSLQNTEEKSSSFPAPQTDPLGDPDQISEDKRHSQGTFTSDYSKYLDSRRAQDFVQWLMNTKRNKNNIAKRHDEFERHAEGTFTSDVSSYLEGQAAKEFIAWLVKGRGRRDFPEEVNIVEELRRRHADGSFSDEMNTVLDSLATRDFINWLLQTKI</sequence>
<reference key="1">
    <citation type="submission" date="2002-07" db="EMBL/GenBank/DDBJ databases">
        <title>Characterization of the endocrine pancreas in an ovine placental insufficiency IUGR fetus.</title>
        <authorList>
            <person name="Limesand S.W."/>
            <person name="Hay W.W. Jr."/>
        </authorList>
    </citation>
    <scope>NUCLEOTIDE SEQUENCE [MRNA]</scope>
    <source>
        <tissue>Pancreas</tissue>
    </source>
</reference>
<comment type="function">
    <molecule>Glucagon</molecule>
    <text evidence="7">Plays a key role in glucose metabolism and homeostasis. Regulates blood glucose by increasing gluconeogenesis and decreasing glycolysis. A counterregulatory hormone of insulin, raises plasma glucose levels in response to insulin-induced hypoglycemia. Plays an important role in initiating and maintaining hyperglycemic conditions in diabetes.</text>
</comment>
<comment type="function">
    <molecule>Glucagon-like peptide 1</molecule>
    <text evidence="7">Potent stimulator of glucose-dependent insulin release. Also stimulates insulin release in response to IL6. Plays important roles on gastric motility and the suppression of plasma glucagon levels. May be involved in the suppression of satiety and stimulation of glucose disposal in peripheral tissues, independent of the actions of insulin. Has growth-promoting activities on intestinal epithelium. May also regulate the hypothalamic pituitary axis (HPA) via effects on LH, TSH, CRH, oxytocin, and vasopressin secretion. Increases islet mass through stimulation of islet neogenesis and pancreatic beta cell proliferation. Inhibits beta cell apoptosis.</text>
</comment>
<comment type="function">
    <molecule>Glucagon-like peptide 2</molecule>
    <text evidence="7">Stimulates intestinal growth and up-regulates villus height in the small intestine, concomitant with increased crypt cell proliferation and decreased enterocyte apoptosis. The gastrointestinal tract, from the stomach to the colon is the principal target for GLP-2 action. Plays a key role in nutrient homeostasis, enhancing nutrient assimilation through enhanced gastrointestinal function, as well as increasing nutrient disposal. Stimulates intestinal glucose transport and decreases mucosal permeability.</text>
</comment>
<comment type="function">
    <molecule>Oxyntomodulin</molecule>
    <text evidence="7">Significantly reduces food intake. Inhibits gastric emptying in humans. Suppression of gastric emptying may lead to increased gastric distension, which may contribute to satiety by causing a sensation of fullness.</text>
</comment>
<comment type="function">
    <molecule>Glicentin</molecule>
    <text evidence="7">May modulate gastric acid secretion and the gastro-pyloro-duodenal activity. May play an important role in intestinal mucosal growth in the early period of life.</text>
</comment>
<comment type="subcellular location">
    <subcellularLocation>
        <location evidence="3">Secreted</location>
    </subcellularLocation>
</comment>
<comment type="subcellular location">
    <molecule>Glucagon-like peptide 1</molecule>
    <subcellularLocation>
        <location evidence="3">Secreted</location>
    </subcellularLocation>
</comment>
<comment type="tissue specificity">
    <text>Glucagon is secreted in the A cells of the islets of Langerhans. GLP-1, GLP-2, oxyntomodulin and glicentin are secreted from enteroendocrine cells throughout the gastrointestinal tract. GLP-1 and GLP-2 are also secreted in selected neurons in the brain.</text>
</comment>
<comment type="induction">
    <text evidence="1">Glucagon release is stimulated by hypoglycemia and inhibited by hyperglycemia, insulin, and somatostatin. GLP-1 and GLP-2 are induced in response to nutrient ingestion (By similarity).</text>
</comment>
<comment type="PTM">
    <text evidence="1">Proglucagon is post-translationally processed in a tissue-specific manner in pancreatic A cells and intestinal L cells. In pancreatic A cells, the major bioactive hormone is glucagon cleaved by PCSK2/PC2. In the intestinal L cells PCSK1/PC1 liberates GLP-1, GLP-2, glicentin and oxyntomodulin. GLP-1 is further N-terminally truncated by post-translational processing in the intestinal L cells resulting in GLP-1(7-37) GLP-1-(7-36)amide. The C-terminal amidation is neither important for the metabolism of GLP-1 nor for its effects on the endocrine pancreas (By similarity).</text>
</comment>
<comment type="miscellaneous">
    <text>GLP-2 does not have cleavage on a pair of basic residues at C-terminus as in other mammals.</text>
</comment>
<comment type="similarity">
    <text evidence="9">Belongs to the glucagon family.</text>
</comment>
<evidence type="ECO:0000250" key="1"/>
<evidence type="ECO:0000250" key="2">
    <source>
        <dbReference type="UniProtKB" id="P01274"/>
    </source>
</evidence>
<evidence type="ECO:0000250" key="3">
    <source>
        <dbReference type="UniProtKB" id="P01275"/>
    </source>
</evidence>
<evidence type="ECO:0000250" key="4">
    <source>
        <dbReference type="UniProtKB" id="P06883"/>
    </source>
</evidence>
<evidence type="ECO:0000250" key="5">
    <source>
        <dbReference type="UniProtKB" id="P09686"/>
    </source>
</evidence>
<evidence type="ECO:0000250" key="6">
    <source>
        <dbReference type="UniProtKB" id="P15438"/>
    </source>
</evidence>
<evidence type="ECO:0000250" key="7">
    <source>
        <dbReference type="UniProtKB" id="P55095"/>
    </source>
</evidence>
<evidence type="ECO:0000256" key="8">
    <source>
        <dbReference type="SAM" id="MobiDB-lite"/>
    </source>
</evidence>
<evidence type="ECO:0000305" key="9"/>